<proteinExistence type="inferred from homology"/>
<comment type="function">
    <text evidence="1">Ligates lysine onto the cytidine present at position 34 of the AUA codon-specific tRNA(Ile) that contains the anticodon CAU, in an ATP-dependent manner. Cytidine is converted to lysidine, thus changing the amino acid specificity of the tRNA from methionine to isoleucine.</text>
</comment>
<comment type="catalytic activity">
    <reaction evidence="1">
        <text>cytidine(34) in tRNA(Ile2) + L-lysine + ATP = lysidine(34) in tRNA(Ile2) + AMP + diphosphate + H(+)</text>
        <dbReference type="Rhea" id="RHEA:43744"/>
        <dbReference type="Rhea" id="RHEA-COMP:10625"/>
        <dbReference type="Rhea" id="RHEA-COMP:10670"/>
        <dbReference type="ChEBI" id="CHEBI:15378"/>
        <dbReference type="ChEBI" id="CHEBI:30616"/>
        <dbReference type="ChEBI" id="CHEBI:32551"/>
        <dbReference type="ChEBI" id="CHEBI:33019"/>
        <dbReference type="ChEBI" id="CHEBI:82748"/>
        <dbReference type="ChEBI" id="CHEBI:83665"/>
        <dbReference type="ChEBI" id="CHEBI:456215"/>
        <dbReference type="EC" id="6.3.4.19"/>
    </reaction>
</comment>
<comment type="subcellular location">
    <subcellularLocation>
        <location evidence="1">Cytoplasm</location>
    </subcellularLocation>
</comment>
<comment type="domain">
    <text>The N-terminal region contains the highly conserved SGGXDS motif, predicted to be a P-loop motif involved in ATP binding.</text>
</comment>
<comment type="similarity">
    <text evidence="1">Belongs to the tRNA(Ile)-lysidine synthase family.</text>
</comment>
<comment type="sequence caution" evidence="2">
    <conflict type="erroneous initiation">
        <sequence resource="EMBL-CDS" id="CAE50535"/>
    </conflict>
</comment>
<organism>
    <name type="scientific">Corynebacterium diphtheriae (strain ATCC 700971 / NCTC 13129 / Biotype gravis)</name>
    <dbReference type="NCBI Taxonomy" id="257309"/>
    <lineage>
        <taxon>Bacteria</taxon>
        <taxon>Bacillati</taxon>
        <taxon>Actinomycetota</taxon>
        <taxon>Actinomycetes</taxon>
        <taxon>Mycobacteriales</taxon>
        <taxon>Corynebacteriaceae</taxon>
        <taxon>Corynebacterium</taxon>
    </lineage>
</organism>
<keyword id="KW-0067">ATP-binding</keyword>
<keyword id="KW-0963">Cytoplasm</keyword>
<keyword id="KW-0436">Ligase</keyword>
<keyword id="KW-0547">Nucleotide-binding</keyword>
<keyword id="KW-1185">Reference proteome</keyword>
<keyword id="KW-0819">tRNA processing</keyword>
<accession>Q6NF90</accession>
<evidence type="ECO:0000255" key="1">
    <source>
        <dbReference type="HAMAP-Rule" id="MF_01161"/>
    </source>
</evidence>
<evidence type="ECO:0000305" key="2"/>
<gene>
    <name evidence="1" type="primary">tilS</name>
    <name type="ordered locus">DIP2004</name>
</gene>
<reference key="1">
    <citation type="journal article" date="2003" name="Nucleic Acids Res.">
        <title>The complete genome sequence and analysis of Corynebacterium diphtheriae NCTC13129.</title>
        <authorList>
            <person name="Cerdeno-Tarraga A.-M."/>
            <person name="Efstratiou A."/>
            <person name="Dover L.G."/>
            <person name="Holden M.T.G."/>
            <person name="Pallen M.J."/>
            <person name="Bentley S.D."/>
            <person name="Besra G.S."/>
            <person name="Churcher C.M."/>
            <person name="James K.D."/>
            <person name="De Zoysa A."/>
            <person name="Chillingworth T."/>
            <person name="Cronin A."/>
            <person name="Dowd L."/>
            <person name="Feltwell T."/>
            <person name="Hamlin N."/>
            <person name="Holroyd S."/>
            <person name="Jagels K."/>
            <person name="Moule S."/>
            <person name="Quail M.A."/>
            <person name="Rabbinowitsch E."/>
            <person name="Rutherford K.M."/>
            <person name="Thomson N.R."/>
            <person name="Unwin L."/>
            <person name="Whitehead S."/>
            <person name="Barrell B.G."/>
            <person name="Parkhill J."/>
        </authorList>
    </citation>
    <scope>NUCLEOTIDE SEQUENCE [LARGE SCALE GENOMIC DNA]</scope>
    <source>
        <strain>ATCC 700971 / NCTC 13129 / Biotype gravis</strain>
    </source>
</reference>
<feature type="chain" id="PRO_0000181682" description="tRNA(Ile)-lysidine synthase">
    <location>
        <begin position="1"/>
        <end position="292"/>
    </location>
</feature>
<feature type="binding site" evidence="1">
    <location>
        <begin position="32"/>
        <end position="37"/>
    </location>
    <ligand>
        <name>ATP</name>
        <dbReference type="ChEBI" id="CHEBI:30616"/>
    </ligand>
</feature>
<dbReference type="EC" id="6.3.4.19" evidence="1"/>
<dbReference type="EMBL" id="BX248359">
    <property type="protein sequence ID" value="CAE50535.1"/>
    <property type="status" value="ALT_INIT"/>
    <property type="molecule type" value="Genomic_DNA"/>
</dbReference>
<dbReference type="RefSeq" id="WP_041628003.1">
    <property type="nucleotide sequence ID" value="NC_002935.2"/>
</dbReference>
<dbReference type="SMR" id="Q6NF90"/>
<dbReference type="STRING" id="257309.DIP2004"/>
<dbReference type="KEGG" id="cdi:DIP2004"/>
<dbReference type="HOGENOM" id="CLU_018869_1_1_11"/>
<dbReference type="Proteomes" id="UP000002198">
    <property type="component" value="Chromosome"/>
</dbReference>
<dbReference type="GO" id="GO:0005737">
    <property type="term" value="C:cytoplasm"/>
    <property type="evidence" value="ECO:0007669"/>
    <property type="project" value="UniProtKB-SubCell"/>
</dbReference>
<dbReference type="GO" id="GO:0005524">
    <property type="term" value="F:ATP binding"/>
    <property type="evidence" value="ECO:0007669"/>
    <property type="project" value="UniProtKB-UniRule"/>
</dbReference>
<dbReference type="GO" id="GO:0032267">
    <property type="term" value="F:tRNA(Ile)-lysidine synthase activity"/>
    <property type="evidence" value="ECO:0007669"/>
    <property type="project" value="UniProtKB-EC"/>
</dbReference>
<dbReference type="GO" id="GO:0006400">
    <property type="term" value="P:tRNA modification"/>
    <property type="evidence" value="ECO:0007669"/>
    <property type="project" value="UniProtKB-UniRule"/>
</dbReference>
<dbReference type="CDD" id="cd01992">
    <property type="entry name" value="TilS_N"/>
    <property type="match status" value="1"/>
</dbReference>
<dbReference type="Gene3D" id="3.40.50.620">
    <property type="entry name" value="HUPs"/>
    <property type="match status" value="1"/>
</dbReference>
<dbReference type="HAMAP" id="MF_01161">
    <property type="entry name" value="tRNA_Ile_lys_synt"/>
    <property type="match status" value="1"/>
</dbReference>
<dbReference type="InterPro" id="IPR014729">
    <property type="entry name" value="Rossmann-like_a/b/a_fold"/>
</dbReference>
<dbReference type="InterPro" id="IPR011063">
    <property type="entry name" value="TilS/TtcA_N"/>
</dbReference>
<dbReference type="InterPro" id="IPR012094">
    <property type="entry name" value="tRNA_Ile_lys_synt"/>
</dbReference>
<dbReference type="InterPro" id="IPR012795">
    <property type="entry name" value="tRNA_Ile_lys_synt_N"/>
</dbReference>
<dbReference type="InterPro" id="IPR015262">
    <property type="entry name" value="tRNA_Ile_lys_synt_subst-bd"/>
</dbReference>
<dbReference type="NCBIfam" id="TIGR02432">
    <property type="entry name" value="lysidine_TilS_N"/>
    <property type="match status" value="1"/>
</dbReference>
<dbReference type="PANTHER" id="PTHR43033">
    <property type="entry name" value="TRNA(ILE)-LYSIDINE SYNTHASE-RELATED"/>
    <property type="match status" value="1"/>
</dbReference>
<dbReference type="PANTHER" id="PTHR43033:SF1">
    <property type="entry name" value="TRNA(ILE)-LYSIDINE SYNTHASE-RELATED"/>
    <property type="match status" value="1"/>
</dbReference>
<dbReference type="Pfam" id="PF01171">
    <property type="entry name" value="ATP_bind_3"/>
    <property type="match status" value="1"/>
</dbReference>
<dbReference type="Pfam" id="PF09179">
    <property type="entry name" value="TilS"/>
    <property type="match status" value="1"/>
</dbReference>
<dbReference type="SUPFAM" id="SSF52402">
    <property type="entry name" value="Adenine nucleotide alpha hydrolases-like"/>
    <property type="match status" value="1"/>
</dbReference>
<protein>
    <recommendedName>
        <fullName evidence="1">tRNA(Ile)-lysidine synthase</fullName>
        <ecNumber evidence="1">6.3.4.19</ecNumber>
    </recommendedName>
    <alternativeName>
        <fullName evidence="1">tRNA(Ile)-2-lysyl-cytidine synthase</fullName>
    </alternativeName>
    <alternativeName>
        <fullName evidence="1">tRNA(Ile)-lysidine synthetase</fullName>
    </alternativeName>
</protein>
<name>TILS_CORDI</name>
<sequence>MHKFWPRHSPNFMACRVAVRTVQPRDITVGLSGGADSLALVAALCAEDYNVHALCVDHGLQPGSHEVAQQAAHHARTFGAHAEIISVTVAPGNLEANARTARYQALHSRNLPVVVGHTADDQAETLLLGALRGKATGMQIHTDNLWRPLLGVRRATTLAACTELGIEPWHDPHNANTDFLRVALRTQVVPLLSDIIGGDAVPALSQAATLIAEDTHALHVDTPDDRIAQLAGMPPALRRRHLVALLQAYGARVSAAHLRAVDALITNWHGQKAVPVGNGLEVTRKDGRLSVS</sequence>